<gene>
    <name evidence="1" type="primary">aroQ</name>
    <name type="ordered locus">Jann_2300</name>
</gene>
<reference key="1">
    <citation type="submission" date="2006-02" db="EMBL/GenBank/DDBJ databases">
        <title>Complete sequence of chromosome of Jannaschia sp. CCS1.</title>
        <authorList>
            <consortium name="US DOE Joint Genome Institute"/>
            <person name="Copeland A."/>
            <person name="Lucas S."/>
            <person name="Lapidus A."/>
            <person name="Barry K."/>
            <person name="Detter J.C."/>
            <person name="Glavina del Rio T."/>
            <person name="Hammon N."/>
            <person name="Israni S."/>
            <person name="Pitluck S."/>
            <person name="Brettin T."/>
            <person name="Bruce D."/>
            <person name="Han C."/>
            <person name="Tapia R."/>
            <person name="Gilna P."/>
            <person name="Chertkov O."/>
            <person name="Saunders E."/>
            <person name="Schmutz J."/>
            <person name="Larimer F."/>
            <person name="Land M."/>
            <person name="Kyrpides N."/>
            <person name="Lykidis A."/>
            <person name="Moran M.A."/>
            <person name="Belas R."/>
            <person name="Ye W."/>
            <person name="Buchan A."/>
            <person name="Gonzalez J.M."/>
            <person name="Schell M.A."/>
            <person name="Richardson P."/>
        </authorList>
    </citation>
    <scope>NUCLEOTIDE SEQUENCE [LARGE SCALE GENOMIC DNA]</scope>
    <source>
        <strain>CCS1</strain>
    </source>
</reference>
<comment type="function">
    <text evidence="1">Catalyzes a trans-dehydration via an enolate intermediate.</text>
</comment>
<comment type="catalytic activity">
    <reaction evidence="1">
        <text>3-dehydroquinate = 3-dehydroshikimate + H2O</text>
        <dbReference type="Rhea" id="RHEA:21096"/>
        <dbReference type="ChEBI" id="CHEBI:15377"/>
        <dbReference type="ChEBI" id="CHEBI:16630"/>
        <dbReference type="ChEBI" id="CHEBI:32364"/>
        <dbReference type="EC" id="4.2.1.10"/>
    </reaction>
</comment>
<comment type="pathway">
    <text evidence="1">Metabolic intermediate biosynthesis; chorismate biosynthesis; chorismate from D-erythrose 4-phosphate and phosphoenolpyruvate: step 3/7.</text>
</comment>
<comment type="subunit">
    <text evidence="1">Homododecamer.</text>
</comment>
<comment type="similarity">
    <text evidence="1">Belongs to the type-II 3-dehydroquinase family.</text>
</comment>
<proteinExistence type="inferred from homology"/>
<dbReference type="EC" id="4.2.1.10" evidence="1"/>
<dbReference type="EMBL" id="CP000264">
    <property type="protein sequence ID" value="ABD55217.1"/>
    <property type="molecule type" value="Genomic_DNA"/>
</dbReference>
<dbReference type="RefSeq" id="WP_011455421.1">
    <property type="nucleotide sequence ID" value="NC_007802.1"/>
</dbReference>
<dbReference type="SMR" id="Q28PZ5"/>
<dbReference type="STRING" id="290400.Jann_2300"/>
<dbReference type="KEGG" id="jan:Jann_2300"/>
<dbReference type="eggNOG" id="COG0757">
    <property type="taxonomic scope" value="Bacteria"/>
</dbReference>
<dbReference type="HOGENOM" id="CLU_090968_1_0_5"/>
<dbReference type="OrthoDB" id="9790793at2"/>
<dbReference type="UniPathway" id="UPA00053">
    <property type="reaction ID" value="UER00086"/>
</dbReference>
<dbReference type="Proteomes" id="UP000008326">
    <property type="component" value="Chromosome"/>
</dbReference>
<dbReference type="GO" id="GO:0003855">
    <property type="term" value="F:3-dehydroquinate dehydratase activity"/>
    <property type="evidence" value="ECO:0007669"/>
    <property type="project" value="UniProtKB-UniRule"/>
</dbReference>
<dbReference type="GO" id="GO:0008652">
    <property type="term" value="P:amino acid biosynthetic process"/>
    <property type="evidence" value="ECO:0007669"/>
    <property type="project" value="UniProtKB-KW"/>
</dbReference>
<dbReference type="GO" id="GO:0009073">
    <property type="term" value="P:aromatic amino acid family biosynthetic process"/>
    <property type="evidence" value="ECO:0007669"/>
    <property type="project" value="UniProtKB-KW"/>
</dbReference>
<dbReference type="GO" id="GO:0009423">
    <property type="term" value="P:chorismate biosynthetic process"/>
    <property type="evidence" value="ECO:0007669"/>
    <property type="project" value="UniProtKB-UniRule"/>
</dbReference>
<dbReference type="GO" id="GO:0019631">
    <property type="term" value="P:quinate catabolic process"/>
    <property type="evidence" value="ECO:0007669"/>
    <property type="project" value="TreeGrafter"/>
</dbReference>
<dbReference type="CDD" id="cd00466">
    <property type="entry name" value="DHQase_II"/>
    <property type="match status" value="1"/>
</dbReference>
<dbReference type="Gene3D" id="3.40.50.9100">
    <property type="entry name" value="Dehydroquinase, class II"/>
    <property type="match status" value="1"/>
</dbReference>
<dbReference type="HAMAP" id="MF_00169">
    <property type="entry name" value="AroQ"/>
    <property type="match status" value="1"/>
</dbReference>
<dbReference type="InterPro" id="IPR001874">
    <property type="entry name" value="DHquinase_II"/>
</dbReference>
<dbReference type="InterPro" id="IPR036441">
    <property type="entry name" value="DHquinase_II_sf"/>
</dbReference>
<dbReference type="NCBIfam" id="TIGR01088">
    <property type="entry name" value="aroQ"/>
    <property type="match status" value="1"/>
</dbReference>
<dbReference type="NCBIfam" id="NF003805">
    <property type="entry name" value="PRK05395.1-2"/>
    <property type="match status" value="1"/>
</dbReference>
<dbReference type="NCBIfam" id="NF003806">
    <property type="entry name" value="PRK05395.1-3"/>
    <property type="match status" value="1"/>
</dbReference>
<dbReference type="NCBIfam" id="NF003807">
    <property type="entry name" value="PRK05395.1-4"/>
    <property type="match status" value="1"/>
</dbReference>
<dbReference type="PANTHER" id="PTHR21272">
    <property type="entry name" value="CATABOLIC 3-DEHYDROQUINASE"/>
    <property type="match status" value="1"/>
</dbReference>
<dbReference type="PANTHER" id="PTHR21272:SF3">
    <property type="entry name" value="CATABOLIC 3-DEHYDROQUINASE"/>
    <property type="match status" value="1"/>
</dbReference>
<dbReference type="Pfam" id="PF01220">
    <property type="entry name" value="DHquinase_II"/>
    <property type="match status" value="1"/>
</dbReference>
<dbReference type="PIRSF" id="PIRSF001399">
    <property type="entry name" value="DHquinase_II"/>
    <property type="match status" value="1"/>
</dbReference>
<dbReference type="SUPFAM" id="SSF52304">
    <property type="entry name" value="Type II 3-dehydroquinate dehydratase"/>
    <property type="match status" value="1"/>
</dbReference>
<protein>
    <recommendedName>
        <fullName evidence="1">3-dehydroquinate dehydratase</fullName>
        <shortName evidence="1">3-dehydroquinase</shortName>
        <ecNumber evidence="1">4.2.1.10</ecNumber>
    </recommendedName>
    <alternativeName>
        <fullName evidence="1">Type II DHQase</fullName>
    </alternativeName>
</protein>
<organism>
    <name type="scientific">Jannaschia sp. (strain CCS1)</name>
    <dbReference type="NCBI Taxonomy" id="290400"/>
    <lineage>
        <taxon>Bacteria</taxon>
        <taxon>Pseudomonadati</taxon>
        <taxon>Pseudomonadota</taxon>
        <taxon>Alphaproteobacteria</taxon>
        <taxon>Rhodobacterales</taxon>
        <taxon>Roseobacteraceae</taxon>
        <taxon>Jannaschia</taxon>
    </lineage>
</organism>
<name>AROQ_JANSC</name>
<evidence type="ECO:0000255" key="1">
    <source>
        <dbReference type="HAMAP-Rule" id="MF_00169"/>
    </source>
</evidence>
<sequence>MKISVFNGPNLNALGTREPGIYGADTLADIEAACRTTAADLGVDLDFLQTNQEGALVDAFHAARDTSDGVVINAGAYTHTSIALRDAISATELPTVELHLSNTHAREAFRHHSMIAPVCVGLILGFGAYGYPLAVTALVQHLKQGNAP</sequence>
<keyword id="KW-0028">Amino-acid biosynthesis</keyword>
<keyword id="KW-0057">Aromatic amino acid biosynthesis</keyword>
<keyword id="KW-0456">Lyase</keyword>
<keyword id="KW-1185">Reference proteome</keyword>
<feature type="chain" id="PRO_1000071581" description="3-dehydroquinate dehydratase">
    <location>
        <begin position="1"/>
        <end position="148"/>
    </location>
</feature>
<feature type="active site" description="Proton acceptor" evidence="1">
    <location>
        <position position="22"/>
    </location>
</feature>
<feature type="active site" description="Proton donor" evidence="1">
    <location>
        <position position="99"/>
    </location>
</feature>
<feature type="binding site" evidence="1">
    <location>
        <position position="73"/>
    </location>
    <ligand>
        <name>substrate</name>
    </ligand>
</feature>
<feature type="binding site" evidence="1">
    <location>
        <position position="79"/>
    </location>
    <ligand>
        <name>substrate</name>
    </ligand>
</feature>
<feature type="binding site" evidence="1">
    <location>
        <position position="86"/>
    </location>
    <ligand>
        <name>substrate</name>
    </ligand>
</feature>
<feature type="binding site" evidence="1">
    <location>
        <begin position="100"/>
        <end position="101"/>
    </location>
    <ligand>
        <name>substrate</name>
    </ligand>
</feature>
<feature type="binding site" evidence="1">
    <location>
        <position position="110"/>
    </location>
    <ligand>
        <name>substrate</name>
    </ligand>
</feature>
<feature type="site" description="Transition state stabilizer" evidence="1">
    <location>
        <position position="17"/>
    </location>
</feature>
<accession>Q28PZ5</accession>